<evidence type="ECO:0000305" key="1"/>
<gene>
    <name type="primary">gcg</name>
</gene>
<reference key="1">
    <citation type="journal article" date="1995" name="Gen. Comp. Endocrinol.">
        <title>Characterization of insulin, glucagon, and somatostatin from the river lamprey, Lampetra fluviatilis.</title>
        <authorList>
            <person name="Conlon J.M."/>
            <person name="Bondareva V."/>
            <person name="Rusakov Y."/>
            <person name="Plisetskaya E.M."/>
            <person name="Mynarcik D.C."/>
            <person name="Whittaker J."/>
        </authorList>
    </citation>
    <scope>PROTEIN SEQUENCE</scope>
    <source>
        <tissue>Small intestine</tissue>
    </source>
</reference>
<name>GLUC_LAMFL</name>
<dbReference type="SMR" id="Q9PRQ9"/>
<dbReference type="GO" id="GO:0005615">
    <property type="term" value="C:extracellular space"/>
    <property type="evidence" value="ECO:0007669"/>
    <property type="project" value="TreeGrafter"/>
</dbReference>
<dbReference type="GO" id="GO:0031769">
    <property type="term" value="F:glucagon receptor binding"/>
    <property type="evidence" value="ECO:0007669"/>
    <property type="project" value="TreeGrafter"/>
</dbReference>
<dbReference type="GO" id="GO:0005179">
    <property type="term" value="F:hormone activity"/>
    <property type="evidence" value="ECO:0007669"/>
    <property type="project" value="UniProtKB-KW"/>
</dbReference>
<dbReference type="GO" id="GO:0007188">
    <property type="term" value="P:adenylate cyclase-modulating G protein-coupled receptor signaling pathway"/>
    <property type="evidence" value="ECO:0007669"/>
    <property type="project" value="TreeGrafter"/>
</dbReference>
<dbReference type="GO" id="GO:0043066">
    <property type="term" value="P:negative regulation of apoptotic process"/>
    <property type="evidence" value="ECO:0007669"/>
    <property type="project" value="TreeGrafter"/>
</dbReference>
<dbReference type="GO" id="GO:0035774">
    <property type="term" value="P:positive regulation of insulin secretion involved in cellular response to glucose stimulus"/>
    <property type="evidence" value="ECO:0007669"/>
    <property type="project" value="TreeGrafter"/>
</dbReference>
<dbReference type="GO" id="GO:0010737">
    <property type="term" value="P:protein kinase A signaling"/>
    <property type="evidence" value="ECO:0007669"/>
    <property type="project" value="TreeGrafter"/>
</dbReference>
<dbReference type="Gene3D" id="6.10.250.590">
    <property type="match status" value="1"/>
</dbReference>
<dbReference type="InterPro" id="IPR015550">
    <property type="entry name" value="Glucagon"/>
</dbReference>
<dbReference type="InterPro" id="IPR000532">
    <property type="entry name" value="Glucagon_GIP_secretin_VIP"/>
</dbReference>
<dbReference type="PANTHER" id="PTHR11418">
    <property type="entry name" value="GLUCAGON"/>
    <property type="match status" value="1"/>
</dbReference>
<dbReference type="PANTHER" id="PTHR11418:SF0">
    <property type="entry name" value="PRO-GLUCAGON"/>
    <property type="match status" value="1"/>
</dbReference>
<dbReference type="Pfam" id="PF00123">
    <property type="entry name" value="Hormone_2"/>
    <property type="match status" value="1"/>
</dbReference>
<dbReference type="PRINTS" id="PR00275">
    <property type="entry name" value="GLUCAGON"/>
</dbReference>
<dbReference type="SMART" id="SM00070">
    <property type="entry name" value="GLUCA"/>
    <property type="match status" value="1"/>
</dbReference>
<dbReference type="PROSITE" id="PS00260">
    <property type="entry name" value="GLUCAGON"/>
    <property type="match status" value="1"/>
</dbReference>
<organism>
    <name type="scientific">Lampetra fluviatilis</name>
    <name type="common">European river lamprey</name>
    <name type="synonym">Petromyzon fluviatilis</name>
    <dbReference type="NCBI Taxonomy" id="7748"/>
    <lineage>
        <taxon>Eukaryota</taxon>
        <taxon>Metazoa</taxon>
        <taxon>Chordata</taxon>
        <taxon>Craniata</taxon>
        <taxon>Vertebrata</taxon>
        <taxon>Cyclostomata</taxon>
        <taxon>Hyperoartia</taxon>
        <taxon>Petromyzontiformes</taxon>
        <taxon>Petromyzontidae</taxon>
        <taxon>Lampetra</taxon>
    </lineage>
</organism>
<protein>
    <recommendedName>
        <fullName>Glucagon</fullName>
    </recommendedName>
</protein>
<feature type="peptide" id="PRO_0000043926" description="Glucagon">
    <location>
        <begin position="1"/>
        <end position="29"/>
    </location>
</feature>
<accession>Q9PRQ9</accession>
<keyword id="KW-0903">Direct protein sequencing</keyword>
<keyword id="KW-0372">Hormone</keyword>
<keyword id="KW-0964">Secreted</keyword>
<sequence length="29" mass="3398">HSQGSFTSDYSKYLDSKQAKDFVIWLMNT</sequence>
<proteinExistence type="evidence at protein level"/>
<comment type="function">
    <text>Glucagon plays a key role in glucose metabolism and homeostasis. Regulates blood glucose by increasing gluconeogenesis and decreasing glycolysis.</text>
</comment>
<comment type="subcellular location">
    <subcellularLocation>
        <location>Secreted</location>
    </subcellularLocation>
</comment>
<comment type="induction">
    <text>Produced in the A cells of the islets of Langerhans in response to a drop in blood sugar concentration.</text>
</comment>
<comment type="similarity">
    <text evidence="1">Belongs to the glucagon family.</text>
</comment>